<accession>Q9KLX5</accession>
<protein>
    <recommendedName>
        <fullName evidence="2">GTP cyclohydrolase 1</fullName>
        <ecNumber evidence="2">3.5.4.16</ecNumber>
    </recommendedName>
    <alternativeName>
        <fullName evidence="2">GTP cyclohydrolase I</fullName>
        <shortName evidence="2">GTP-CH-I</shortName>
    </alternativeName>
</protein>
<gene>
    <name evidence="2" type="primary">folE</name>
    <name type="ordered locus">VC_A0616</name>
</gene>
<sequence>MSGLSESAKLVKDALERRGLETPMQPNLATPAEKKEKIEQHMREILNLLGLDLTDDSLEETPQRIAKMYVDEIFSGLDYANFPKITVIENKMKVSEMVKVKDITLTSTCEHHLVTIDGTAAVAYIPRGKIIGLSKINRIVRFFAQRPQVQERMTQQILVALQTLLESDDVAVTIDATHYCVKSRGVMDATSVTTTTALGGIFKSNPATRAEFLHGLR</sequence>
<keyword id="KW-0342">GTP-binding</keyword>
<keyword id="KW-0378">Hydrolase</keyword>
<keyword id="KW-0479">Metal-binding</keyword>
<keyword id="KW-0547">Nucleotide-binding</keyword>
<keyword id="KW-0554">One-carbon metabolism</keyword>
<keyword id="KW-1185">Reference proteome</keyword>
<keyword id="KW-0862">Zinc</keyword>
<dbReference type="EC" id="3.5.4.16" evidence="2"/>
<dbReference type="EMBL" id="AE003853">
    <property type="protein sequence ID" value="AAF96517.1"/>
    <property type="status" value="ALT_INIT"/>
    <property type="molecule type" value="Genomic_DNA"/>
</dbReference>
<dbReference type="PIR" id="D82439">
    <property type="entry name" value="D82439"/>
</dbReference>
<dbReference type="RefSeq" id="NP_233005.1">
    <property type="nucleotide sequence ID" value="NC_002506.1"/>
</dbReference>
<dbReference type="RefSeq" id="WP_000016195.1">
    <property type="nucleotide sequence ID" value="NZ_LT906615.1"/>
</dbReference>
<dbReference type="SMR" id="Q9KLX5"/>
<dbReference type="STRING" id="243277.VC_A0616"/>
<dbReference type="DNASU" id="2612591"/>
<dbReference type="EnsemblBacteria" id="AAF96517">
    <property type="protein sequence ID" value="AAF96517"/>
    <property type="gene ID" value="VC_A0616"/>
</dbReference>
<dbReference type="GeneID" id="89512498"/>
<dbReference type="KEGG" id="vch:VC_A0616"/>
<dbReference type="PATRIC" id="fig|243277.26.peg.3244"/>
<dbReference type="eggNOG" id="COG0302">
    <property type="taxonomic scope" value="Bacteria"/>
</dbReference>
<dbReference type="HOGENOM" id="CLU_049768_3_2_6"/>
<dbReference type="UniPathway" id="UPA00848">
    <property type="reaction ID" value="UER00151"/>
</dbReference>
<dbReference type="Proteomes" id="UP000000584">
    <property type="component" value="Chromosome 2"/>
</dbReference>
<dbReference type="GO" id="GO:0005737">
    <property type="term" value="C:cytoplasm"/>
    <property type="evidence" value="ECO:0000318"/>
    <property type="project" value="GO_Central"/>
</dbReference>
<dbReference type="GO" id="GO:0005525">
    <property type="term" value="F:GTP binding"/>
    <property type="evidence" value="ECO:0000318"/>
    <property type="project" value="GO_Central"/>
</dbReference>
<dbReference type="GO" id="GO:0003934">
    <property type="term" value="F:GTP cyclohydrolase I activity"/>
    <property type="evidence" value="ECO:0000318"/>
    <property type="project" value="GO_Central"/>
</dbReference>
<dbReference type="GO" id="GO:0008270">
    <property type="term" value="F:zinc ion binding"/>
    <property type="evidence" value="ECO:0000318"/>
    <property type="project" value="GO_Central"/>
</dbReference>
<dbReference type="GO" id="GO:0006730">
    <property type="term" value="P:one-carbon metabolic process"/>
    <property type="evidence" value="ECO:0007669"/>
    <property type="project" value="UniProtKB-UniRule"/>
</dbReference>
<dbReference type="GO" id="GO:0006729">
    <property type="term" value="P:tetrahydrobiopterin biosynthetic process"/>
    <property type="evidence" value="ECO:0000318"/>
    <property type="project" value="GO_Central"/>
</dbReference>
<dbReference type="GO" id="GO:0046654">
    <property type="term" value="P:tetrahydrofolate biosynthetic process"/>
    <property type="evidence" value="ECO:0007669"/>
    <property type="project" value="UniProtKB-UniRule"/>
</dbReference>
<dbReference type="FunFam" id="1.10.286.10:FF:000002">
    <property type="entry name" value="GTP cyclohydrolase 1"/>
    <property type="match status" value="1"/>
</dbReference>
<dbReference type="FunFam" id="3.30.1130.10:FF:000001">
    <property type="entry name" value="GTP cyclohydrolase 1"/>
    <property type="match status" value="1"/>
</dbReference>
<dbReference type="Gene3D" id="1.10.286.10">
    <property type="match status" value="1"/>
</dbReference>
<dbReference type="Gene3D" id="3.30.1130.10">
    <property type="match status" value="1"/>
</dbReference>
<dbReference type="HAMAP" id="MF_00223">
    <property type="entry name" value="FolE"/>
    <property type="match status" value="1"/>
</dbReference>
<dbReference type="InterPro" id="IPR043133">
    <property type="entry name" value="GTP-CH-I_C/QueF"/>
</dbReference>
<dbReference type="InterPro" id="IPR043134">
    <property type="entry name" value="GTP-CH-I_N"/>
</dbReference>
<dbReference type="InterPro" id="IPR001474">
    <property type="entry name" value="GTP_CycHdrlase_I"/>
</dbReference>
<dbReference type="InterPro" id="IPR018234">
    <property type="entry name" value="GTP_CycHdrlase_I_CS"/>
</dbReference>
<dbReference type="InterPro" id="IPR020602">
    <property type="entry name" value="GTP_CycHdrlase_I_dom"/>
</dbReference>
<dbReference type="NCBIfam" id="TIGR00063">
    <property type="entry name" value="folE"/>
    <property type="match status" value="1"/>
</dbReference>
<dbReference type="NCBIfam" id="NF006824">
    <property type="entry name" value="PRK09347.1-1"/>
    <property type="match status" value="1"/>
</dbReference>
<dbReference type="NCBIfam" id="NF006825">
    <property type="entry name" value="PRK09347.1-2"/>
    <property type="match status" value="1"/>
</dbReference>
<dbReference type="NCBIfam" id="NF006826">
    <property type="entry name" value="PRK09347.1-3"/>
    <property type="match status" value="1"/>
</dbReference>
<dbReference type="PANTHER" id="PTHR11109:SF7">
    <property type="entry name" value="GTP CYCLOHYDROLASE 1"/>
    <property type="match status" value="1"/>
</dbReference>
<dbReference type="PANTHER" id="PTHR11109">
    <property type="entry name" value="GTP CYCLOHYDROLASE I"/>
    <property type="match status" value="1"/>
</dbReference>
<dbReference type="Pfam" id="PF01227">
    <property type="entry name" value="GTP_cyclohydroI"/>
    <property type="match status" value="1"/>
</dbReference>
<dbReference type="SUPFAM" id="SSF55620">
    <property type="entry name" value="Tetrahydrobiopterin biosynthesis enzymes-like"/>
    <property type="match status" value="1"/>
</dbReference>
<dbReference type="PROSITE" id="PS00859">
    <property type="entry name" value="GTP_CYCLOHYDROL_1_1"/>
    <property type="match status" value="1"/>
</dbReference>
<dbReference type="PROSITE" id="PS00860">
    <property type="entry name" value="GTP_CYCLOHYDROL_1_2"/>
    <property type="match status" value="1"/>
</dbReference>
<proteinExistence type="inferred from homology"/>
<feature type="chain" id="PRO_0000119460" description="GTP cyclohydrolase 1">
    <location>
        <begin position="1"/>
        <end position="217"/>
    </location>
</feature>
<feature type="binding site" evidence="2">
    <location>
        <position position="109"/>
    </location>
    <ligand>
        <name>Zn(2+)</name>
        <dbReference type="ChEBI" id="CHEBI:29105"/>
    </ligand>
</feature>
<feature type="binding site" evidence="2">
    <location>
        <position position="112"/>
    </location>
    <ligand>
        <name>Zn(2+)</name>
        <dbReference type="ChEBI" id="CHEBI:29105"/>
    </ligand>
</feature>
<feature type="binding site" evidence="2">
    <location>
        <position position="180"/>
    </location>
    <ligand>
        <name>Zn(2+)</name>
        <dbReference type="ChEBI" id="CHEBI:29105"/>
    </ligand>
</feature>
<reference key="1">
    <citation type="journal article" date="2000" name="Nature">
        <title>DNA sequence of both chromosomes of the cholera pathogen Vibrio cholerae.</title>
        <authorList>
            <person name="Heidelberg J.F."/>
            <person name="Eisen J.A."/>
            <person name="Nelson W.C."/>
            <person name="Clayton R.A."/>
            <person name="Gwinn M.L."/>
            <person name="Dodson R.J."/>
            <person name="Haft D.H."/>
            <person name="Hickey E.K."/>
            <person name="Peterson J.D."/>
            <person name="Umayam L.A."/>
            <person name="Gill S.R."/>
            <person name="Nelson K.E."/>
            <person name="Read T.D."/>
            <person name="Tettelin H."/>
            <person name="Richardson D.L."/>
            <person name="Ermolaeva M.D."/>
            <person name="Vamathevan J.J."/>
            <person name="Bass S."/>
            <person name="Qin H."/>
            <person name="Dragoi I."/>
            <person name="Sellers P."/>
            <person name="McDonald L.A."/>
            <person name="Utterback T.R."/>
            <person name="Fleischmann R.D."/>
            <person name="Nierman W.C."/>
            <person name="White O."/>
            <person name="Salzberg S.L."/>
            <person name="Smith H.O."/>
            <person name="Colwell R.R."/>
            <person name="Mekalanos J.J."/>
            <person name="Venter J.C."/>
            <person name="Fraser C.M."/>
        </authorList>
    </citation>
    <scope>NUCLEOTIDE SEQUENCE [LARGE SCALE GENOMIC DNA]</scope>
    <source>
        <strain>ATCC 39315 / El Tor Inaba N16961</strain>
    </source>
</reference>
<evidence type="ECO:0000250" key="1"/>
<evidence type="ECO:0000255" key="2">
    <source>
        <dbReference type="HAMAP-Rule" id="MF_00223"/>
    </source>
</evidence>
<evidence type="ECO:0000305" key="3"/>
<name>GCH1_VIBCH</name>
<comment type="catalytic activity">
    <reaction evidence="2">
        <text>GTP + H2O = 7,8-dihydroneopterin 3'-triphosphate + formate + H(+)</text>
        <dbReference type="Rhea" id="RHEA:17473"/>
        <dbReference type="ChEBI" id="CHEBI:15377"/>
        <dbReference type="ChEBI" id="CHEBI:15378"/>
        <dbReference type="ChEBI" id="CHEBI:15740"/>
        <dbReference type="ChEBI" id="CHEBI:37565"/>
        <dbReference type="ChEBI" id="CHEBI:58462"/>
        <dbReference type="EC" id="3.5.4.16"/>
    </reaction>
</comment>
<comment type="pathway">
    <text evidence="2">Cofactor biosynthesis; 7,8-dihydroneopterin triphosphate biosynthesis; 7,8-dihydroneopterin triphosphate from GTP: step 1/1.</text>
</comment>
<comment type="subunit">
    <text evidence="1">Toroid-shaped homodecamer, composed of two pentamers of five dimers.</text>
</comment>
<comment type="similarity">
    <text evidence="2">Belongs to the GTP cyclohydrolase I family.</text>
</comment>
<comment type="sequence caution" evidence="3">
    <conflict type="erroneous initiation">
        <sequence resource="EMBL-CDS" id="AAF96517"/>
    </conflict>
</comment>
<organism>
    <name type="scientific">Vibrio cholerae serotype O1 (strain ATCC 39315 / El Tor Inaba N16961)</name>
    <dbReference type="NCBI Taxonomy" id="243277"/>
    <lineage>
        <taxon>Bacteria</taxon>
        <taxon>Pseudomonadati</taxon>
        <taxon>Pseudomonadota</taxon>
        <taxon>Gammaproteobacteria</taxon>
        <taxon>Vibrionales</taxon>
        <taxon>Vibrionaceae</taxon>
        <taxon>Vibrio</taxon>
    </lineage>
</organism>